<sequence>MSKASDAVREPLVDKNMAGSKPDQPWMVYLSTFVAVCGSFAFGSCAGYSSPAQAAIRNDLSLTIAEFSLFGSLLTFGAMIGAITSGPIADLVGRKGAMRVSSAFCVVGWLAIIFAKGVVALDLGRLATGYGMGAFSYVVPIFIAEIAPKTFRGALTTLNQILICTGVSVSFIIGTLVTWRVLALIGIIPCAASFLGLFFIPESPRWLAKVGRDTEFEAALRKLRGKKADISEEAAEIQDYIETLERLPKAKMLDLFQRRYIRSVLIAFGLMVFQQFGGINGICFYTSSIFEQAGFPTRLGMIIYAVLQVVITALNAPIVDRAGRKPLLLVSATGLVIGCLIAAVSFYLKVHDMAHEAVPVLAVVGIMVYIGSFSAGMGAMPWVVMSEIFPINIKGVAGGMATLVNWFGAWAVSYTFNFLMSWSSYGTFLIYAAINALAIVFVIAIVPETKGKTLEQIQAIVNP</sequence>
<comment type="function">
    <text evidence="3">Sugar transporter.</text>
</comment>
<comment type="subcellular location">
    <subcellularLocation>
        <location evidence="1">Membrane</location>
        <topology evidence="1">Multi-pass membrane protein</topology>
    </subcellularLocation>
</comment>
<comment type="similarity">
    <text evidence="3">Belongs to the major facilitator superfamily. Sugar transporter (TC 2.A.1.1) family.</text>
</comment>
<evidence type="ECO:0000250" key="1"/>
<evidence type="ECO:0000255" key="2"/>
<evidence type="ECO:0000305" key="3"/>
<feature type="chain" id="PRO_0000259857" description="Sugar transporter ERD6-like 7">
    <location>
        <begin position="1"/>
        <end position="463"/>
    </location>
</feature>
<feature type="transmembrane region" description="Helical; Name=1" evidence="2">
    <location>
        <begin position="26"/>
        <end position="46"/>
    </location>
</feature>
<feature type="transmembrane region" description="Helical; Name=2" evidence="2">
    <location>
        <begin position="69"/>
        <end position="89"/>
    </location>
</feature>
<feature type="transmembrane region" description="Helical; Name=3" evidence="2">
    <location>
        <begin position="103"/>
        <end position="123"/>
    </location>
</feature>
<feature type="transmembrane region" description="Helical; Name=4" evidence="2">
    <location>
        <begin position="126"/>
        <end position="146"/>
    </location>
</feature>
<feature type="transmembrane region" description="Helical; Name=5" evidence="2">
    <location>
        <begin position="157"/>
        <end position="177"/>
    </location>
</feature>
<feature type="transmembrane region" description="Helical; Name=6" evidence="2">
    <location>
        <begin position="181"/>
        <end position="201"/>
    </location>
</feature>
<feature type="transmembrane region" description="Helical; Name=7" evidence="2">
    <location>
        <begin position="264"/>
        <end position="284"/>
    </location>
</feature>
<feature type="transmembrane region" description="Helical; Name=8" evidence="2">
    <location>
        <begin position="299"/>
        <end position="319"/>
    </location>
</feature>
<feature type="transmembrane region" description="Helical; Name=9" evidence="2">
    <location>
        <begin position="327"/>
        <end position="347"/>
    </location>
</feature>
<feature type="transmembrane region" description="Helical; Name=10" evidence="2">
    <location>
        <begin position="357"/>
        <end position="377"/>
    </location>
</feature>
<feature type="transmembrane region" description="Helical; Name=11" evidence="2">
    <location>
        <begin position="396"/>
        <end position="416"/>
    </location>
</feature>
<feature type="transmembrane region" description="Helical; Name=12" evidence="2">
    <location>
        <begin position="426"/>
        <end position="446"/>
    </location>
</feature>
<feature type="sequence conflict" description="In Ref. 4; AAM61246." evidence="3" ref="4">
    <original>S</original>
    <variation>P</variation>
    <location>
        <position position="39"/>
    </location>
</feature>
<feature type="sequence conflict" description="In Ref. 5; CAB06336." evidence="3" ref="5">
    <original>GVVAL</original>
    <variation>VLLRI</variation>
    <location>
        <begin position="117"/>
        <end position="121"/>
    </location>
</feature>
<feature type="sequence conflict" description="In Ref. 4; AAM61246." evidence="3" ref="4">
    <original>I</original>
    <variation>V</variation>
    <location>
        <position position="460"/>
    </location>
</feature>
<accession>P93051</accession>
<accession>Q8LFR8</accession>
<accession>Q9ZU87</accession>
<organism>
    <name type="scientific">Arabidopsis thaliana</name>
    <name type="common">Mouse-ear cress</name>
    <dbReference type="NCBI Taxonomy" id="3702"/>
    <lineage>
        <taxon>Eukaryota</taxon>
        <taxon>Viridiplantae</taxon>
        <taxon>Streptophyta</taxon>
        <taxon>Embryophyta</taxon>
        <taxon>Tracheophyta</taxon>
        <taxon>Spermatophyta</taxon>
        <taxon>Magnoliopsida</taxon>
        <taxon>eudicotyledons</taxon>
        <taxon>Gunneridae</taxon>
        <taxon>Pentapetalae</taxon>
        <taxon>rosids</taxon>
        <taxon>malvids</taxon>
        <taxon>Brassicales</taxon>
        <taxon>Brassicaceae</taxon>
        <taxon>Camelineae</taxon>
        <taxon>Arabidopsis</taxon>
    </lineage>
</organism>
<proteinExistence type="evidence at transcript level"/>
<name>ERDL7_ARATH</name>
<reference key="1">
    <citation type="journal article" date="1999" name="Nature">
        <title>Sequence and analysis of chromosome 2 of the plant Arabidopsis thaliana.</title>
        <authorList>
            <person name="Lin X."/>
            <person name="Kaul S."/>
            <person name="Rounsley S.D."/>
            <person name="Shea T.P."/>
            <person name="Benito M.-I."/>
            <person name="Town C.D."/>
            <person name="Fujii C.Y."/>
            <person name="Mason T.M."/>
            <person name="Bowman C.L."/>
            <person name="Barnstead M.E."/>
            <person name="Feldblyum T.V."/>
            <person name="Buell C.R."/>
            <person name="Ketchum K.A."/>
            <person name="Lee J.J."/>
            <person name="Ronning C.M."/>
            <person name="Koo H.L."/>
            <person name="Moffat K.S."/>
            <person name="Cronin L.A."/>
            <person name="Shen M."/>
            <person name="Pai G."/>
            <person name="Van Aken S."/>
            <person name="Umayam L."/>
            <person name="Tallon L.J."/>
            <person name="Gill J.E."/>
            <person name="Adams M.D."/>
            <person name="Carrera A.J."/>
            <person name="Creasy T.H."/>
            <person name="Goodman H.M."/>
            <person name="Somerville C.R."/>
            <person name="Copenhaver G.P."/>
            <person name="Preuss D."/>
            <person name="Nierman W.C."/>
            <person name="White O."/>
            <person name="Eisen J.A."/>
            <person name="Salzberg S.L."/>
            <person name="Fraser C.M."/>
            <person name="Venter J.C."/>
        </authorList>
    </citation>
    <scope>NUCLEOTIDE SEQUENCE [LARGE SCALE GENOMIC DNA]</scope>
    <source>
        <strain>cv. Columbia</strain>
    </source>
</reference>
<reference key="2">
    <citation type="journal article" date="2017" name="Plant J.">
        <title>Araport11: a complete reannotation of the Arabidopsis thaliana reference genome.</title>
        <authorList>
            <person name="Cheng C.Y."/>
            <person name="Krishnakumar V."/>
            <person name="Chan A.P."/>
            <person name="Thibaud-Nissen F."/>
            <person name="Schobel S."/>
            <person name="Town C.D."/>
        </authorList>
    </citation>
    <scope>GENOME REANNOTATION</scope>
    <source>
        <strain>cv. Columbia</strain>
    </source>
</reference>
<reference key="3">
    <citation type="journal article" date="2003" name="Science">
        <title>Empirical analysis of transcriptional activity in the Arabidopsis genome.</title>
        <authorList>
            <person name="Yamada K."/>
            <person name="Lim J."/>
            <person name="Dale J.M."/>
            <person name="Chen H."/>
            <person name="Shinn P."/>
            <person name="Palm C.J."/>
            <person name="Southwick A.M."/>
            <person name="Wu H.C."/>
            <person name="Kim C.J."/>
            <person name="Nguyen M."/>
            <person name="Pham P.K."/>
            <person name="Cheuk R.F."/>
            <person name="Karlin-Newmann G."/>
            <person name="Liu S.X."/>
            <person name="Lam B."/>
            <person name="Sakano H."/>
            <person name="Wu T."/>
            <person name="Yu G."/>
            <person name="Miranda M."/>
            <person name="Quach H.L."/>
            <person name="Tripp M."/>
            <person name="Chang C.H."/>
            <person name="Lee J.M."/>
            <person name="Toriumi M.J."/>
            <person name="Chan M.M."/>
            <person name="Tang C.C."/>
            <person name="Onodera C.S."/>
            <person name="Deng J.M."/>
            <person name="Akiyama K."/>
            <person name="Ansari Y."/>
            <person name="Arakawa T."/>
            <person name="Banh J."/>
            <person name="Banno F."/>
            <person name="Bowser L."/>
            <person name="Brooks S.Y."/>
            <person name="Carninci P."/>
            <person name="Chao Q."/>
            <person name="Choy N."/>
            <person name="Enju A."/>
            <person name="Goldsmith A.D."/>
            <person name="Gurjal M."/>
            <person name="Hansen N.F."/>
            <person name="Hayashizaki Y."/>
            <person name="Johnson-Hopson C."/>
            <person name="Hsuan V.W."/>
            <person name="Iida K."/>
            <person name="Karnes M."/>
            <person name="Khan S."/>
            <person name="Koesema E."/>
            <person name="Ishida J."/>
            <person name="Jiang P.X."/>
            <person name="Jones T."/>
            <person name="Kawai J."/>
            <person name="Kamiya A."/>
            <person name="Meyers C."/>
            <person name="Nakajima M."/>
            <person name="Narusaka M."/>
            <person name="Seki M."/>
            <person name="Sakurai T."/>
            <person name="Satou M."/>
            <person name="Tamse R."/>
            <person name="Vaysberg M."/>
            <person name="Wallender E.K."/>
            <person name="Wong C."/>
            <person name="Yamamura Y."/>
            <person name="Yuan S."/>
            <person name="Shinozaki K."/>
            <person name="Davis R.W."/>
            <person name="Theologis A."/>
            <person name="Ecker J.R."/>
        </authorList>
    </citation>
    <scope>NUCLEOTIDE SEQUENCE [LARGE SCALE MRNA]</scope>
    <source>
        <strain>cv. Columbia</strain>
    </source>
</reference>
<reference key="4">
    <citation type="submission" date="2002-03" db="EMBL/GenBank/DDBJ databases">
        <title>Full-length cDNA from Arabidopsis thaliana.</title>
        <authorList>
            <person name="Brover V.V."/>
            <person name="Troukhan M.E."/>
            <person name="Alexandrov N.A."/>
            <person name="Lu Y.-P."/>
            <person name="Flavell R.B."/>
            <person name="Feldmann K.A."/>
        </authorList>
    </citation>
    <scope>NUCLEOTIDE SEQUENCE [LARGE SCALE MRNA]</scope>
</reference>
<reference key="5">
    <citation type="journal article" date="1998" name="Plant Mol. Biol.">
        <title>Analysis of T-DNA-mediated translational beta-glucuronidase gene fusions.</title>
        <authorList>
            <person name="Kertbundit S."/>
            <person name="Linacero R."/>
            <person name="Rouze P."/>
            <person name="Galis I."/>
            <person name="Macas J."/>
            <person name="Deboeck F."/>
            <person name="Renckens S."/>
            <person name="Hernalsteens J.-P."/>
            <person name="de Greve H."/>
        </authorList>
    </citation>
    <scope>NUCLEOTIDE SEQUENCE [GENOMIC DNA] OF 1-121</scope>
    <source>
        <strain>cv. C24</strain>
    </source>
</reference>
<reference key="6">
    <citation type="journal article" date="2006" name="BMC Evol. Biol.">
        <title>The monosaccharide transporter gene family in land plants is ancient and shows differential subfamily expression and expansion across lineages.</title>
        <authorList>
            <person name="Johnson D.A."/>
            <person name="Hill J.P."/>
            <person name="Thomas M.A."/>
        </authorList>
    </citation>
    <scope>GENE FAMILY</scope>
</reference>
<gene>
    <name type="ordered locus">At2g48020</name>
    <name type="ORF">T9J23.17</name>
</gene>
<protein>
    <recommendedName>
        <fullName>Sugar transporter ERD6-like 7</fullName>
    </recommendedName>
</protein>
<dbReference type="EMBL" id="AC006072">
    <property type="protein sequence ID" value="AAD13706.2"/>
    <property type="molecule type" value="Genomic_DNA"/>
</dbReference>
<dbReference type="EMBL" id="CP002685">
    <property type="protein sequence ID" value="AEC10924.1"/>
    <property type="molecule type" value="Genomic_DNA"/>
</dbReference>
<dbReference type="EMBL" id="CP002685">
    <property type="protein sequence ID" value="AEC10925.1"/>
    <property type="molecule type" value="Genomic_DNA"/>
</dbReference>
<dbReference type="EMBL" id="AY120715">
    <property type="protein sequence ID" value="AAM53273.1"/>
    <property type="molecule type" value="mRNA"/>
</dbReference>
<dbReference type="EMBL" id="BT000053">
    <property type="protein sequence ID" value="AAN15372.1"/>
    <property type="molecule type" value="mRNA"/>
</dbReference>
<dbReference type="EMBL" id="AY084684">
    <property type="protein sequence ID" value="AAM61246.1"/>
    <property type="molecule type" value="mRNA"/>
</dbReference>
<dbReference type="EMBL" id="Z84202">
    <property type="protein sequence ID" value="CAB06336.1"/>
    <property type="molecule type" value="Genomic_DNA"/>
</dbReference>
<dbReference type="PIR" id="D84922">
    <property type="entry name" value="D84922"/>
</dbReference>
<dbReference type="RefSeq" id="NP_566120.1">
    <property type="nucleotide sequence ID" value="NM_130369.4"/>
</dbReference>
<dbReference type="RefSeq" id="NP_850483.1">
    <property type="nucleotide sequence ID" value="NM_180152.3"/>
</dbReference>
<dbReference type="SMR" id="P93051"/>
<dbReference type="BioGRID" id="4749">
    <property type="interactions" value="1"/>
</dbReference>
<dbReference type="FunCoup" id="P93051">
    <property type="interactions" value="852"/>
</dbReference>
<dbReference type="STRING" id="3702.P93051"/>
<dbReference type="PaxDb" id="3702-AT2G48020.1"/>
<dbReference type="ProteomicsDB" id="221852"/>
<dbReference type="EnsemblPlants" id="AT2G48020.1">
    <property type="protein sequence ID" value="AT2G48020.1"/>
    <property type="gene ID" value="AT2G48020"/>
</dbReference>
<dbReference type="EnsemblPlants" id="AT2G48020.2">
    <property type="protein sequence ID" value="AT2G48020.2"/>
    <property type="gene ID" value="AT2G48020"/>
</dbReference>
<dbReference type="GeneID" id="819414"/>
<dbReference type="Gramene" id="AT2G48020.1">
    <property type="protein sequence ID" value="AT2G48020.1"/>
    <property type="gene ID" value="AT2G48020"/>
</dbReference>
<dbReference type="Gramene" id="AT2G48020.2">
    <property type="protein sequence ID" value="AT2G48020.2"/>
    <property type="gene ID" value="AT2G48020"/>
</dbReference>
<dbReference type="KEGG" id="ath:AT2G48020"/>
<dbReference type="Araport" id="AT2G48020"/>
<dbReference type="TAIR" id="AT2G48020">
    <property type="gene designation" value="ZIF2"/>
</dbReference>
<dbReference type="eggNOG" id="KOG0254">
    <property type="taxonomic scope" value="Eukaryota"/>
</dbReference>
<dbReference type="HOGENOM" id="CLU_001265_30_5_1"/>
<dbReference type="InParanoid" id="P93051"/>
<dbReference type="OMA" id="GWLIMFQ"/>
<dbReference type="OrthoDB" id="6133115at2759"/>
<dbReference type="PhylomeDB" id="P93051"/>
<dbReference type="PRO" id="PR:P93051"/>
<dbReference type="Proteomes" id="UP000006548">
    <property type="component" value="Chromosome 2"/>
</dbReference>
<dbReference type="ExpressionAtlas" id="P93051">
    <property type="expression patterns" value="baseline and differential"/>
</dbReference>
<dbReference type="GO" id="GO:0005829">
    <property type="term" value="C:cytosol"/>
    <property type="evidence" value="ECO:0007005"/>
    <property type="project" value="TAIR"/>
</dbReference>
<dbReference type="GO" id="GO:0000325">
    <property type="term" value="C:plant-type vacuole"/>
    <property type="evidence" value="ECO:0007005"/>
    <property type="project" value="TAIR"/>
</dbReference>
<dbReference type="GO" id="GO:0009705">
    <property type="term" value="C:plant-type vacuole membrane"/>
    <property type="evidence" value="ECO:0000314"/>
    <property type="project" value="TAIR"/>
</dbReference>
<dbReference type="GO" id="GO:0051119">
    <property type="term" value="F:sugar transmembrane transporter activity"/>
    <property type="evidence" value="ECO:0007669"/>
    <property type="project" value="InterPro"/>
</dbReference>
<dbReference type="GO" id="GO:0006829">
    <property type="term" value="P:zinc ion transport"/>
    <property type="evidence" value="ECO:0000315"/>
    <property type="project" value="TAIR"/>
</dbReference>
<dbReference type="CDD" id="cd17358">
    <property type="entry name" value="MFS_GLUT6_8_Class3_like"/>
    <property type="match status" value="1"/>
</dbReference>
<dbReference type="FunFam" id="1.20.1250.20:FF:000043">
    <property type="entry name" value="sugar transporter ERD6-like 6"/>
    <property type="match status" value="1"/>
</dbReference>
<dbReference type="Gene3D" id="1.20.1250.20">
    <property type="entry name" value="MFS general substrate transporter like domains"/>
    <property type="match status" value="1"/>
</dbReference>
<dbReference type="InterPro" id="IPR020846">
    <property type="entry name" value="MFS_dom"/>
</dbReference>
<dbReference type="InterPro" id="IPR044775">
    <property type="entry name" value="MFS_ERD6/Tret1-like"/>
</dbReference>
<dbReference type="InterPro" id="IPR005828">
    <property type="entry name" value="MFS_sugar_transport-like"/>
</dbReference>
<dbReference type="InterPro" id="IPR036259">
    <property type="entry name" value="MFS_trans_sf"/>
</dbReference>
<dbReference type="InterPro" id="IPR050549">
    <property type="entry name" value="MFS_Trehalose_Transporter"/>
</dbReference>
<dbReference type="InterPro" id="IPR003663">
    <property type="entry name" value="Sugar/inositol_transpt"/>
</dbReference>
<dbReference type="InterPro" id="IPR005829">
    <property type="entry name" value="Sugar_transporter_CS"/>
</dbReference>
<dbReference type="NCBIfam" id="TIGR00879">
    <property type="entry name" value="SP"/>
    <property type="match status" value="1"/>
</dbReference>
<dbReference type="PANTHER" id="PTHR48021">
    <property type="match status" value="1"/>
</dbReference>
<dbReference type="PANTHER" id="PTHR48021:SF13">
    <property type="entry name" value="SUGAR TRANSPORTER ERD6-LIKE 7"/>
    <property type="match status" value="1"/>
</dbReference>
<dbReference type="Pfam" id="PF00083">
    <property type="entry name" value="Sugar_tr"/>
    <property type="match status" value="1"/>
</dbReference>
<dbReference type="PRINTS" id="PR00171">
    <property type="entry name" value="SUGRTRNSPORT"/>
</dbReference>
<dbReference type="SUPFAM" id="SSF103473">
    <property type="entry name" value="MFS general substrate transporter"/>
    <property type="match status" value="1"/>
</dbReference>
<dbReference type="PROSITE" id="PS50850">
    <property type="entry name" value="MFS"/>
    <property type="match status" value="1"/>
</dbReference>
<dbReference type="PROSITE" id="PS00216">
    <property type="entry name" value="SUGAR_TRANSPORT_1"/>
    <property type="match status" value="1"/>
</dbReference>
<keyword id="KW-0472">Membrane</keyword>
<keyword id="KW-1185">Reference proteome</keyword>
<keyword id="KW-0762">Sugar transport</keyword>
<keyword id="KW-0812">Transmembrane</keyword>
<keyword id="KW-1133">Transmembrane helix</keyword>
<keyword id="KW-0813">Transport</keyword>